<comment type="function">
    <text evidence="1">Hydrolyzes extracellular Ap3A into AMP and ADP, and Ap4A into AMP and ATP. Ap3A and Ap4A are diadenosine polyphosphates thought to induce proliferation of vascular smooth muscle cells. Acts as a procoagulant, mediating platelet aggregation at the site of nascent thrombus via release of ADP from Ap3A and activation of ADP receptors (By similarity).</text>
</comment>
<comment type="catalytic activity">
    <reaction>
        <text>P(1),P(3)-bis(5'-adenosyl) triphosphate + H2O = AMP + ADP + 2 H(+)</text>
        <dbReference type="Rhea" id="RHEA:13893"/>
        <dbReference type="ChEBI" id="CHEBI:15377"/>
        <dbReference type="ChEBI" id="CHEBI:15378"/>
        <dbReference type="ChEBI" id="CHEBI:58529"/>
        <dbReference type="ChEBI" id="CHEBI:456215"/>
        <dbReference type="ChEBI" id="CHEBI:456216"/>
        <dbReference type="EC" id="3.6.1.29"/>
    </reaction>
</comment>
<comment type="cofactor">
    <cofactor evidence="1">
        <name>Zn(2+)</name>
        <dbReference type="ChEBI" id="CHEBI:29105"/>
    </cofactor>
    <text evidence="1">Binds 2 Zn(2+) ions per subunit.</text>
</comment>
<comment type="subcellular location">
    <subcellularLocation>
        <location evidence="1">Cell membrane</location>
        <topology>Single-pass type I membrane protein</topology>
    </subcellularLocation>
</comment>
<comment type="alternative products">
    <event type="alternative splicing"/>
    <isoform>
        <id>Q8BTJ4-1</id>
        <name>1</name>
        <sequence type="displayed"/>
    </isoform>
    <isoform>
        <id>Q8BTJ4-2</id>
        <name>2</name>
        <sequence type="described" ref="VSP_032370"/>
    </isoform>
</comment>
<comment type="similarity">
    <text evidence="5">Belongs to the nucleotide pyrophosphatase/phosphodiesterase family.</text>
</comment>
<comment type="sequence caution" evidence="5">
    <conflict type="erroneous initiation">
        <sequence resource="EMBL-CDS" id="BAD32326"/>
    </conflict>
</comment>
<proteinExistence type="evidence at protein level"/>
<reference key="1">
    <citation type="journal article" date="2004" name="DNA Res.">
        <title>Prediction of the coding sequences of mouse homologues of KIAA gene: IV. The complete nucleotide sequences of 500 mouse KIAA-homologous cDNAs identified by screening of terminal sequences of cDNA clones randomly sampled from size-fractionated libraries.</title>
        <authorList>
            <person name="Okazaki N."/>
            <person name="Kikuno R."/>
            <person name="Ohara R."/>
            <person name="Inamoto S."/>
            <person name="Koseki H."/>
            <person name="Hiraoka S."/>
            <person name="Saga Y."/>
            <person name="Seino S."/>
            <person name="Nishimura M."/>
            <person name="Kaisho T."/>
            <person name="Hoshino K."/>
            <person name="Kitamura H."/>
            <person name="Nagase T."/>
            <person name="Ohara O."/>
            <person name="Koga H."/>
        </authorList>
    </citation>
    <scope>NUCLEOTIDE SEQUENCE [LARGE SCALE MRNA] (ISOFORM 2)</scope>
    <source>
        <tissue>Pancreatic islet</tissue>
    </source>
</reference>
<reference key="2">
    <citation type="journal article" date="2005" name="Science">
        <title>The transcriptional landscape of the mammalian genome.</title>
        <authorList>
            <person name="Carninci P."/>
            <person name="Kasukawa T."/>
            <person name="Katayama S."/>
            <person name="Gough J."/>
            <person name="Frith M.C."/>
            <person name="Maeda N."/>
            <person name="Oyama R."/>
            <person name="Ravasi T."/>
            <person name="Lenhard B."/>
            <person name="Wells C."/>
            <person name="Kodzius R."/>
            <person name="Shimokawa K."/>
            <person name="Bajic V.B."/>
            <person name="Brenner S.E."/>
            <person name="Batalov S."/>
            <person name="Forrest A.R."/>
            <person name="Zavolan M."/>
            <person name="Davis M.J."/>
            <person name="Wilming L.G."/>
            <person name="Aidinis V."/>
            <person name="Allen J.E."/>
            <person name="Ambesi-Impiombato A."/>
            <person name="Apweiler R."/>
            <person name="Aturaliya R.N."/>
            <person name="Bailey T.L."/>
            <person name="Bansal M."/>
            <person name="Baxter L."/>
            <person name="Beisel K.W."/>
            <person name="Bersano T."/>
            <person name="Bono H."/>
            <person name="Chalk A.M."/>
            <person name="Chiu K.P."/>
            <person name="Choudhary V."/>
            <person name="Christoffels A."/>
            <person name="Clutterbuck D.R."/>
            <person name="Crowe M.L."/>
            <person name="Dalla E."/>
            <person name="Dalrymple B.P."/>
            <person name="de Bono B."/>
            <person name="Della Gatta G."/>
            <person name="di Bernardo D."/>
            <person name="Down T."/>
            <person name="Engstrom P."/>
            <person name="Fagiolini M."/>
            <person name="Faulkner G."/>
            <person name="Fletcher C.F."/>
            <person name="Fukushima T."/>
            <person name="Furuno M."/>
            <person name="Futaki S."/>
            <person name="Gariboldi M."/>
            <person name="Georgii-Hemming P."/>
            <person name="Gingeras T.R."/>
            <person name="Gojobori T."/>
            <person name="Green R.E."/>
            <person name="Gustincich S."/>
            <person name="Harbers M."/>
            <person name="Hayashi Y."/>
            <person name="Hensch T.K."/>
            <person name="Hirokawa N."/>
            <person name="Hill D."/>
            <person name="Huminiecki L."/>
            <person name="Iacono M."/>
            <person name="Ikeo K."/>
            <person name="Iwama A."/>
            <person name="Ishikawa T."/>
            <person name="Jakt M."/>
            <person name="Kanapin A."/>
            <person name="Katoh M."/>
            <person name="Kawasawa Y."/>
            <person name="Kelso J."/>
            <person name="Kitamura H."/>
            <person name="Kitano H."/>
            <person name="Kollias G."/>
            <person name="Krishnan S.P."/>
            <person name="Kruger A."/>
            <person name="Kummerfeld S.K."/>
            <person name="Kurochkin I.V."/>
            <person name="Lareau L.F."/>
            <person name="Lazarevic D."/>
            <person name="Lipovich L."/>
            <person name="Liu J."/>
            <person name="Liuni S."/>
            <person name="McWilliam S."/>
            <person name="Madan Babu M."/>
            <person name="Madera M."/>
            <person name="Marchionni L."/>
            <person name="Matsuda H."/>
            <person name="Matsuzawa S."/>
            <person name="Miki H."/>
            <person name="Mignone F."/>
            <person name="Miyake S."/>
            <person name="Morris K."/>
            <person name="Mottagui-Tabar S."/>
            <person name="Mulder N."/>
            <person name="Nakano N."/>
            <person name="Nakauchi H."/>
            <person name="Ng P."/>
            <person name="Nilsson R."/>
            <person name="Nishiguchi S."/>
            <person name="Nishikawa S."/>
            <person name="Nori F."/>
            <person name="Ohara O."/>
            <person name="Okazaki Y."/>
            <person name="Orlando V."/>
            <person name="Pang K.C."/>
            <person name="Pavan W.J."/>
            <person name="Pavesi G."/>
            <person name="Pesole G."/>
            <person name="Petrovsky N."/>
            <person name="Piazza S."/>
            <person name="Reed J."/>
            <person name="Reid J.F."/>
            <person name="Ring B.Z."/>
            <person name="Ringwald M."/>
            <person name="Rost B."/>
            <person name="Ruan Y."/>
            <person name="Salzberg S.L."/>
            <person name="Sandelin A."/>
            <person name="Schneider C."/>
            <person name="Schoenbach C."/>
            <person name="Sekiguchi K."/>
            <person name="Semple C.A."/>
            <person name="Seno S."/>
            <person name="Sessa L."/>
            <person name="Sheng Y."/>
            <person name="Shibata Y."/>
            <person name="Shimada H."/>
            <person name="Shimada K."/>
            <person name="Silva D."/>
            <person name="Sinclair B."/>
            <person name="Sperling S."/>
            <person name="Stupka E."/>
            <person name="Sugiura K."/>
            <person name="Sultana R."/>
            <person name="Takenaka Y."/>
            <person name="Taki K."/>
            <person name="Tammoja K."/>
            <person name="Tan S.L."/>
            <person name="Tang S."/>
            <person name="Taylor M.S."/>
            <person name="Tegner J."/>
            <person name="Teichmann S.A."/>
            <person name="Ueda H.R."/>
            <person name="van Nimwegen E."/>
            <person name="Verardo R."/>
            <person name="Wei C.L."/>
            <person name="Yagi K."/>
            <person name="Yamanishi H."/>
            <person name="Zabarovsky E."/>
            <person name="Zhu S."/>
            <person name="Zimmer A."/>
            <person name="Hide W."/>
            <person name="Bult C."/>
            <person name="Grimmond S.M."/>
            <person name="Teasdale R.D."/>
            <person name="Liu E.T."/>
            <person name="Brusic V."/>
            <person name="Quackenbush J."/>
            <person name="Wahlestedt C."/>
            <person name="Mattick J.S."/>
            <person name="Hume D.A."/>
            <person name="Kai C."/>
            <person name="Sasaki D."/>
            <person name="Tomaru Y."/>
            <person name="Fukuda S."/>
            <person name="Kanamori-Katayama M."/>
            <person name="Suzuki M."/>
            <person name="Aoki J."/>
            <person name="Arakawa T."/>
            <person name="Iida J."/>
            <person name="Imamura K."/>
            <person name="Itoh M."/>
            <person name="Kato T."/>
            <person name="Kawaji H."/>
            <person name="Kawagashira N."/>
            <person name="Kawashima T."/>
            <person name="Kojima M."/>
            <person name="Kondo S."/>
            <person name="Konno H."/>
            <person name="Nakano K."/>
            <person name="Ninomiya N."/>
            <person name="Nishio T."/>
            <person name="Okada M."/>
            <person name="Plessy C."/>
            <person name="Shibata K."/>
            <person name="Shiraki T."/>
            <person name="Suzuki S."/>
            <person name="Tagami M."/>
            <person name="Waki K."/>
            <person name="Watahiki A."/>
            <person name="Okamura-Oho Y."/>
            <person name="Suzuki H."/>
            <person name="Kawai J."/>
            <person name="Hayashizaki Y."/>
        </authorList>
    </citation>
    <scope>NUCLEOTIDE SEQUENCE [LARGE SCALE MRNA] (ISOFORM 1)</scope>
    <source>
        <strain>C3H/HeJ</strain>
        <strain>NOD</strain>
        <tissue>Brain</tissue>
        <tissue>Spleen</tissue>
    </source>
</reference>
<reference key="3">
    <citation type="journal article" date="2004" name="Genome Res.">
        <title>The status, quality, and expansion of the NIH full-length cDNA project: the Mammalian Gene Collection (MGC).</title>
        <authorList>
            <consortium name="The MGC Project Team"/>
        </authorList>
    </citation>
    <scope>NUCLEOTIDE SEQUENCE [LARGE SCALE MRNA] (ISOFORM 1)</scope>
    <source>
        <strain>Czech II</strain>
        <tissue>Mammary tumor</tissue>
    </source>
</reference>
<reference key="4">
    <citation type="journal article" date="2009" name="Nat. Biotechnol.">
        <title>Mass-spectrometric identification and relative quantification of N-linked cell surface glycoproteins.</title>
        <authorList>
            <person name="Wollscheid B."/>
            <person name="Bausch-Fluck D."/>
            <person name="Henderson C."/>
            <person name="O'Brien R."/>
            <person name="Bibel M."/>
            <person name="Schiess R."/>
            <person name="Aebersold R."/>
            <person name="Watts J.D."/>
        </authorList>
    </citation>
    <scope>GLYCOSYLATION [LARGE SCALE ANALYSIS] AT ASN-279</scope>
</reference>
<reference key="5">
    <citation type="journal article" date="2010" name="Cell">
        <title>A tissue-specific atlas of mouse protein phosphorylation and expression.</title>
        <authorList>
            <person name="Huttlin E.L."/>
            <person name="Jedrychowski M.P."/>
            <person name="Elias J.E."/>
            <person name="Goswami T."/>
            <person name="Rad R."/>
            <person name="Beausoleil S.A."/>
            <person name="Villen J."/>
            <person name="Haas W."/>
            <person name="Sowa M.E."/>
            <person name="Gygi S.P."/>
        </authorList>
    </citation>
    <scope>IDENTIFICATION BY MASS SPECTROMETRY [LARGE SCALE ANALYSIS]</scope>
    <source>
        <tissue>Brain</tissue>
        <tissue>Kidney</tissue>
        <tissue>Lung</tissue>
        <tissue>Testis</tissue>
    </source>
</reference>
<keyword id="KW-0025">Alternative splicing</keyword>
<keyword id="KW-0094">Blood coagulation</keyword>
<keyword id="KW-1003">Cell membrane</keyword>
<keyword id="KW-1015">Disulfide bond</keyword>
<keyword id="KW-0325">Glycoprotein</keyword>
<keyword id="KW-0356">Hemostasis</keyword>
<keyword id="KW-0378">Hydrolase</keyword>
<keyword id="KW-0472">Membrane</keyword>
<keyword id="KW-0479">Metal-binding</keyword>
<keyword id="KW-1185">Reference proteome</keyword>
<keyword id="KW-0732">Signal</keyword>
<keyword id="KW-0812">Transmembrane</keyword>
<keyword id="KW-1133">Transmembrane helix</keyword>
<keyword id="KW-0862">Zinc</keyword>
<feature type="signal peptide" evidence="2">
    <location>
        <begin position="1"/>
        <end position="18"/>
    </location>
</feature>
<feature type="chain" id="PRO_0000324796" description="Bis(5'-adenosyl)-triphosphatase enpp4">
    <location>
        <begin position="19"/>
        <end position="456"/>
    </location>
</feature>
<feature type="topological domain" description="Extracellular" evidence="2">
    <location>
        <begin position="19"/>
        <end position="410"/>
    </location>
</feature>
<feature type="transmembrane region" description="Helical" evidence="2">
    <location>
        <begin position="411"/>
        <end position="431"/>
    </location>
</feature>
<feature type="topological domain" description="Cytoplasmic" evidence="2">
    <location>
        <begin position="432"/>
        <end position="456"/>
    </location>
</feature>
<feature type="active site" description="AMP-threonine intermediate" evidence="1">
    <location>
        <position position="73"/>
    </location>
</feature>
<feature type="binding site" evidence="1">
    <location>
        <position position="37"/>
    </location>
    <ligand>
        <name>Zn(2+)</name>
        <dbReference type="ChEBI" id="CHEBI:29105"/>
        <label>1</label>
        <note>catalytic</note>
    </ligand>
</feature>
<feature type="binding site" evidence="1">
    <location>
        <position position="73"/>
    </location>
    <ligand>
        <name>Zn(2+)</name>
        <dbReference type="ChEBI" id="CHEBI:29105"/>
        <label>1</label>
        <note>catalytic</note>
    </ligand>
</feature>
<feature type="binding site" evidence="1">
    <location>
        <position position="94"/>
    </location>
    <ligand>
        <name>substrate</name>
    </ligand>
</feature>
<feature type="binding site" evidence="1">
    <location>
        <position position="157"/>
    </location>
    <ligand>
        <name>substrate</name>
    </ligand>
</feature>
<feature type="binding site" evidence="1">
    <location>
        <position position="192"/>
    </location>
    <ligand>
        <name>substrate</name>
    </ligand>
</feature>
<feature type="binding site" evidence="1">
    <location>
        <position position="192"/>
    </location>
    <ligand>
        <name>Zn(2+)</name>
        <dbReference type="ChEBI" id="CHEBI:29105"/>
        <label>2</label>
        <note>catalytic</note>
    </ligand>
</feature>
<feature type="binding site" evidence="1">
    <location>
        <position position="196"/>
    </location>
    <ligand>
        <name>Zn(2+)</name>
        <dbReference type="ChEBI" id="CHEBI:29105"/>
        <label>2</label>
        <note>catalytic</note>
    </ligand>
</feature>
<feature type="binding site" evidence="1">
    <location>
        <position position="240"/>
    </location>
    <ligand>
        <name>Zn(2+)</name>
        <dbReference type="ChEBI" id="CHEBI:29105"/>
        <label>1</label>
        <note>catalytic</note>
    </ligand>
</feature>
<feature type="binding site" evidence="1">
    <location>
        <position position="241"/>
    </location>
    <ligand>
        <name>Zn(2+)</name>
        <dbReference type="ChEBI" id="CHEBI:29105"/>
        <label>1</label>
        <note>catalytic</note>
    </ligand>
</feature>
<feature type="binding site" evidence="1">
    <location>
        <position position="339"/>
    </location>
    <ligand>
        <name>Zn(2+)</name>
        <dbReference type="ChEBI" id="CHEBI:29105"/>
        <label>2</label>
        <note>catalytic</note>
    </ligand>
</feature>
<feature type="glycosylation site" description="N-linked (GlcNAc...) asparagine" evidence="2">
    <location>
        <position position="148"/>
    </location>
</feature>
<feature type="glycosylation site" description="N-linked (GlcNAc...) asparagine" evidence="2">
    <location>
        <position position="169"/>
    </location>
</feature>
<feature type="glycosylation site" description="N-linked (GlcNAc...) asparagine" evidence="3">
    <location>
        <position position="279"/>
    </location>
</feature>
<feature type="glycosylation site" description="N-linked (GlcNAc...) asparagine" evidence="2">
    <location>
        <position position="330"/>
    </location>
</feature>
<feature type="glycosylation site" description="N-linked (GlcNAc...) asparagine" evidence="2">
    <location>
        <position position="389"/>
    </location>
</feature>
<feature type="disulfide bond" evidence="1">
    <location>
        <begin position="257"/>
        <end position="290"/>
    </location>
</feature>
<feature type="disulfide bond" evidence="1">
    <location>
        <begin position="397"/>
        <end position="404"/>
    </location>
</feature>
<feature type="splice variant" id="VSP_032370" description="In isoform 2." evidence="4">
    <location>
        <begin position="157"/>
        <end position="189"/>
    </location>
</feature>
<feature type="sequence conflict" description="In Ref. 3; AAH27749." evidence="5" ref="3">
    <original>S</original>
    <variation>N</variation>
    <location>
        <position position="88"/>
    </location>
</feature>
<feature type="sequence conflict" description="In Ref. 2; BAE34135." evidence="5" ref="2">
    <original>I</original>
    <variation>V</variation>
    <location>
        <position position="236"/>
    </location>
</feature>
<gene>
    <name type="primary">Enpp4</name>
    <name type="synonym">Kiaa0879</name>
</gene>
<evidence type="ECO:0000250" key="1"/>
<evidence type="ECO:0000255" key="2"/>
<evidence type="ECO:0000269" key="3">
    <source>
    </source>
</evidence>
<evidence type="ECO:0000303" key="4">
    <source>
    </source>
</evidence>
<evidence type="ECO:0000305" key="5"/>
<accession>Q8BTJ4</accession>
<accession>Q3TZS2</accession>
<accession>Q69ZX0</accession>
<accession>Q8K1L3</accession>
<name>ENPP4_MOUSE</name>
<sequence>MFNMKILVIPLFWGLVTGYKGNSSDSSAPRLLLVSFDGFRADYLKSYDLPHLQNFIKEGVLVEHVKNVFITKTFPNHYSIVTGLYEESHGIVANSMYDSVTKKHFSESNDKDPFWWNGAEPIWVTNQLQENRSSAAAMWPGTDVPIHNITASYFMNYSSSVSFKERLGNVTTWLSSSNPPVTFAALYWEEPDVSGHKYGPEDKENMRRVLKEVDDLIGDIVLKLKVLGLWDSLNVIITSDHGMAQCSKNRLIDLDSCIDRSNYSVIDLTPVAAILPKINVTEVYDKLKRCNPHMNVYLKEAIPNRFYYQHSSRIQPIILVAEEGWTITLNKSSFKLGDHGYDNSLPSMHPFLAAHGPAFRKGYRQSTINTVDIYPMMCHILGLKPHPNNGTLSHTKCLLVDQWCINLPEAIGIVVSALLVLTMLTGLMIFMRSRASTSRPFSRLQLQEDDDDPLID</sequence>
<organism>
    <name type="scientific">Mus musculus</name>
    <name type="common">Mouse</name>
    <dbReference type="NCBI Taxonomy" id="10090"/>
    <lineage>
        <taxon>Eukaryota</taxon>
        <taxon>Metazoa</taxon>
        <taxon>Chordata</taxon>
        <taxon>Craniata</taxon>
        <taxon>Vertebrata</taxon>
        <taxon>Euteleostomi</taxon>
        <taxon>Mammalia</taxon>
        <taxon>Eutheria</taxon>
        <taxon>Euarchontoglires</taxon>
        <taxon>Glires</taxon>
        <taxon>Rodentia</taxon>
        <taxon>Myomorpha</taxon>
        <taxon>Muroidea</taxon>
        <taxon>Muridae</taxon>
        <taxon>Murinae</taxon>
        <taxon>Mus</taxon>
        <taxon>Mus</taxon>
    </lineage>
</organism>
<dbReference type="EC" id="3.6.1.29"/>
<dbReference type="EMBL" id="AK173048">
    <property type="protein sequence ID" value="BAD32326.1"/>
    <property type="status" value="ALT_INIT"/>
    <property type="molecule type" value="Transcribed_RNA"/>
</dbReference>
<dbReference type="EMBL" id="AK157622">
    <property type="protein sequence ID" value="BAE34135.1"/>
    <property type="molecule type" value="mRNA"/>
</dbReference>
<dbReference type="EMBL" id="AK090098">
    <property type="protein sequence ID" value="BAC41090.1"/>
    <property type="molecule type" value="mRNA"/>
</dbReference>
<dbReference type="EMBL" id="BC027749">
    <property type="protein sequence ID" value="AAH27749.2"/>
    <property type="molecule type" value="mRNA"/>
</dbReference>
<dbReference type="CCDS" id="CCDS28803.1">
    <molecule id="Q8BTJ4-1"/>
</dbReference>
<dbReference type="RefSeq" id="NP_001344925.1">
    <molecule id="Q8BTJ4-1"/>
    <property type="nucleotide sequence ID" value="NM_001357996.2"/>
</dbReference>
<dbReference type="RefSeq" id="NP_001344926.1">
    <molecule id="Q8BTJ4-1"/>
    <property type="nucleotide sequence ID" value="NM_001357997.2"/>
</dbReference>
<dbReference type="RefSeq" id="NP_001419201.1">
    <molecule id="Q8BTJ4-1"/>
    <property type="nucleotide sequence ID" value="NM_001432272.1"/>
</dbReference>
<dbReference type="RefSeq" id="NP_950181.2">
    <molecule id="Q8BTJ4-1"/>
    <property type="nucleotide sequence ID" value="NM_199016.3"/>
</dbReference>
<dbReference type="RefSeq" id="XP_006524193.2">
    <property type="nucleotide sequence ID" value="XM_006524130.3"/>
</dbReference>
<dbReference type="RefSeq" id="XP_006524197.1">
    <property type="nucleotide sequence ID" value="XM_006524134.2"/>
</dbReference>
<dbReference type="SMR" id="Q8BTJ4"/>
<dbReference type="FunCoup" id="Q8BTJ4">
    <property type="interactions" value="690"/>
</dbReference>
<dbReference type="STRING" id="10090.ENSMUSP00000024757"/>
<dbReference type="GlyConnect" id="2156">
    <property type="glycosylation" value="5 N-Linked glycans (2 sites)"/>
</dbReference>
<dbReference type="GlyCosmos" id="Q8BTJ4">
    <property type="glycosylation" value="5 sites, 5 glycans"/>
</dbReference>
<dbReference type="GlyGen" id="Q8BTJ4">
    <property type="glycosylation" value="8 sites, 9 N-linked glycans (4 sites), 1 O-linked glycan (1 site)"/>
</dbReference>
<dbReference type="iPTMnet" id="Q8BTJ4"/>
<dbReference type="PhosphoSitePlus" id="Q8BTJ4"/>
<dbReference type="SwissPalm" id="Q8BTJ4"/>
<dbReference type="PaxDb" id="10090-ENSMUSP00000024757"/>
<dbReference type="PeptideAtlas" id="Q8BTJ4"/>
<dbReference type="ProteomicsDB" id="275910">
    <molecule id="Q8BTJ4-1"/>
</dbReference>
<dbReference type="ProteomicsDB" id="275911">
    <molecule id="Q8BTJ4-2"/>
</dbReference>
<dbReference type="Pumba" id="Q8BTJ4"/>
<dbReference type="Antibodypedia" id="2757">
    <property type="antibodies" value="117 antibodies from 21 providers"/>
</dbReference>
<dbReference type="DNASU" id="224794"/>
<dbReference type="Ensembl" id="ENSMUST00000024757.14">
    <molecule id="Q8BTJ4-1"/>
    <property type="protein sequence ID" value="ENSMUSP00000024757.8"/>
    <property type="gene ID" value="ENSMUSG00000023961.17"/>
</dbReference>
<dbReference type="Ensembl" id="ENSMUST00000143137.2">
    <molecule id="Q8BTJ4-1"/>
    <property type="protein sequence ID" value="ENSMUSP00000114429.2"/>
    <property type="gene ID" value="ENSMUSG00000023961.17"/>
</dbReference>
<dbReference type="GeneID" id="224794"/>
<dbReference type="KEGG" id="mmu:224794"/>
<dbReference type="UCSC" id="uc008cpu.1">
    <molecule id="Q8BTJ4-1"/>
    <property type="organism name" value="mouse"/>
</dbReference>
<dbReference type="AGR" id="MGI:2682634"/>
<dbReference type="CTD" id="22875"/>
<dbReference type="MGI" id="MGI:2682634">
    <property type="gene designation" value="Enpp4"/>
</dbReference>
<dbReference type="VEuPathDB" id="HostDB:ENSMUSG00000023961"/>
<dbReference type="eggNOG" id="KOG2645">
    <property type="taxonomic scope" value="Eukaryota"/>
</dbReference>
<dbReference type="GeneTree" id="ENSGT00940000158831"/>
<dbReference type="HOGENOM" id="CLU_017594_1_2_1"/>
<dbReference type="InParanoid" id="Q8BTJ4"/>
<dbReference type="OMA" id="DVCIDHS"/>
<dbReference type="OrthoDB" id="415411at2759"/>
<dbReference type="PhylomeDB" id="Q8BTJ4"/>
<dbReference type="TreeFam" id="TF330032"/>
<dbReference type="Reactome" id="R-MMU-6798695">
    <property type="pathway name" value="Neutrophil degranulation"/>
</dbReference>
<dbReference type="BioGRID-ORCS" id="224794">
    <property type="hits" value="2 hits in 77 CRISPR screens"/>
</dbReference>
<dbReference type="PRO" id="PR:Q8BTJ4"/>
<dbReference type="Proteomes" id="UP000000589">
    <property type="component" value="Chromosome 17"/>
</dbReference>
<dbReference type="RNAct" id="Q8BTJ4">
    <property type="molecule type" value="protein"/>
</dbReference>
<dbReference type="Bgee" id="ENSMUSG00000023961">
    <property type="expression patterns" value="Expressed in substantia nigra and 220 other cell types or tissues"/>
</dbReference>
<dbReference type="GO" id="GO:0005886">
    <property type="term" value="C:plasma membrane"/>
    <property type="evidence" value="ECO:0007669"/>
    <property type="project" value="UniProtKB-SubCell"/>
</dbReference>
<dbReference type="GO" id="GO:0047710">
    <property type="term" value="F:bis(5'-adenosyl)-triphosphatase activity"/>
    <property type="evidence" value="ECO:0007669"/>
    <property type="project" value="UniProtKB-EC"/>
</dbReference>
<dbReference type="GO" id="GO:0046872">
    <property type="term" value="F:metal ion binding"/>
    <property type="evidence" value="ECO:0007669"/>
    <property type="project" value="UniProtKB-KW"/>
</dbReference>
<dbReference type="GO" id="GO:0007596">
    <property type="term" value="P:blood coagulation"/>
    <property type="evidence" value="ECO:0007669"/>
    <property type="project" value="UniProtKB-KW"/>
</dbReference>
<dbReference type="GO" id="GO:0030194">
    <property type="term" value="P:positive regulation of blood coagulation"/>
    <property type="evidence" value="ECO:0007669"/>
    <property type="project" value="Ensembl"/>
</dbReference>
<dbReference type="GO" id="GO:0046130">
    <property type="term" value="P:purine ribonucleoside catabolic process"/>
    <property type="evidence" value="ECO:0007669"/>
    <property type="project" value="Ensembl"/>
</dbReference>
<dbReference type="CDD" id="cd16018">
    <property type="entry name" value="Enpp"/>
    <property type="match status" value="1"/>
</dbReference>
<dbReference type="FunFam" id="3.40.720.10:FF:000035">
    <property type="entry name" value="Ectonucleotide pyrophosphatase/phosphodiesterase 4 (Putative)"/>
    <property type="match status" value="1"/>
</dbReference>
<dbReference type="FunFam" id="3.30.1360.180:FF:000004">
    <property type="entry name" value="Ectonucleotide pyrophosphatase/phosphodiesterase family member 4"/>
    <property type="match status" value="1"/>
</dbReference>
<dbReference type="Gene3D" id="3.30.1360.180">
    <property type="match status" value="1"/>
</dbReference>
<dbReference type="Gene3D" id="3.40.720.10">
    <property type="entry name" value="Alkaline Phosphatase, subunit A"/>
    <property type="match status" value="1"/>
</dbReference>
<dbReference type="InterPro" id="IPR017850">
    <property type="entry name" value="Alkaline_phosphatase_core_sf"/>
</dbReference>
<dbReference type="InterPro" id="IPR002591">
    <property type="entry name" value="Phosphodiest/P_Trfase"/>
</dbReference>
<dbReference type="PANTHER" id="PTHR10151:SF79">
    <property type="entry name" value="BIS(5'-ADENOSYL)-TRIPHOSPHATASE ENPP4"/>
    <property type="match status" value="1"/>
</dbReference>
<dbReference type="PANTHER" id="PTHR10151">
    <property type="entry name" value="ECTONUCLEOTIDE PYROPHOSPHATASE/PHOSPHODIESTERASE"/>
    <property type="match status" value="1"/>
</dbReference>
<dbReference type="Pfam" id="PF01663">
    <property type="entry name" value="Phosphodiest"/>
    <property type="match status" value="1"/>
</dbReference>
<dbReference type="SUPFAM" id="SSF53649">
    <property type="entry name" value="Alkaline phosphatase-like"/>
    <property type="match status" value="1"/>
</dbReference>
<protein>
    <recommendedName>
        <fullName>Bis(5'-adenosyl)-triphosphatase enpp4</fullName>
        <ecNumber>3.6.1.29</ecNumber>
    </recommendedName>
    <alternativeName>
        <fullName>AP3A hydrolase</fullName>
        <shortName>AP3Aase</shortName>
    </alternativeName>
    <alternativeName>
        <fullName>Ectonucleotide pyrophosphatase/phosphodiesterase family member 4</fullName>
        <shortName>E-NPP 4</shortName>
        <shortName>NPP-4</shortName>
    </alternativeName>
</protein>